<reference key="1">
    <citation type="journal article" date="2005" name="Science">
        <title>The genome of the kinetoplastid parasite, Leishmania major.</title>
        <authorList>
            <person name="Ivens A.C."/>
            <person name="Peacock C.S."/>
            <person name="Worthey E.A."/>
            <person name="Murphy L."/>
            <person name="Aggarwal G."/>
            <person name="Berriman M."/>
            <person name="Sisk E."/>
            <person name="Rajandream M.A."/>
            <person name="Adlem E."/>
            <person name="Aert R."/>
            <person name="Anupama A."/>
            <person name="Apostolou Z."/>
            <person name="Attipoe P."/>
            <person name="Bason N."/>
            <person name="Bauser C."/>
            <person name="Beck A."/>
            <person name="Beverley S.M."/>
            <person name="Bianchettin G."/>
            <person name="Borzym K."/>
            <person name="Bothe G."/>
            <person name="Bruschi C.V."/>
            <person name="Collins M."/>
            <person name="Cadag E."/>
            <person name="Ciarloni L."/>
            <person name="Clayton C."/>
            <person name="Coulson R.M.R."/>
            <person name="Cronin A."/>
            <person name="Cruz A.K."/>
            <person name="Davies R.M."/>
            <person name="De Gaudenzi J."/>
            <person name="Dobson D.E."/>
            <person name="Duesterhoeft A."/>
            <person name="Fazelina G."/>
            <person name="Fosker N."/>
            <person name="Frasch A.C."/>
            <person name="Fraser A."/>
            <person name="Fuchs M."/>
            <person name="Gabel C."/>
            <person name="Goble A."/>
            <person name="Goffeau A."/>
            <person name="Harris D."/>
            <person name="Hertz-Fowler C."/>
            <person name="Hilbert H."/>
            <person name="Horn D."/>
            <person name="Huang Y."/>
            <person name="Klages S."/>
            <person name="Knights A."/>
            <person name="Kube M."/>
            <person name="Larke N."/>
            <person name="Litvin L."/>
            <person name="Lord A."/>
            <person name="Louie T."/>
            <person name="Marra M."/>
            <person name="Masuy D."/>
            <person name="Matthews K."/>
            <person name="Michaeli S."/>
            <person name="Mottram J.C."/>
            <person name="Mueller-Auer S."/>
            <person name="Munden H."/>
            <person name="Nelson S."/>
            <person name="Norbertczak H."/>
            <person name="Oliver K."/>
            <person name="O'neil S."/>
            <person name="Pentony M."/>
            <person name="Pohl T.M."/>
            <person name="Price C."/>
            <person name="Purnelle B."/>
            <person name="Quail M.A."/>
            <person name="Rabbinowitsch E."/>
            <person name="Reinhardt R."/>
            <person name="Rieger M."/>
            <person name="Rinta J."/>
            <person name="Robben J."/>
            <person name="Robertson L."/>
            <person name="Ruiz J.C."/>
            <person name="Rutter S."/>
            <person name="Saunders D."/>
            <person name="Schaefer M."/>
            <person name="Schein J."/>
            <person name="Schwartz D.C."/>
            <person name="Seeger K."/>
            <person name="Seyler A."/>
            <person name="Sharp S."/>
            <person name="Shin H."/>
            <person name="Sivam D."/>
            <person name="Squares R."/>
            <person name="Squares S."/>
            <person name="Tosato V."/>
            <person name="Vogt C."/>
            <person name="Volckaert G."/>
            <person name="Wambutt R."/>
            <person name="Warren T."/>
            <person name="Wedler H."/>
            <person name="Woodward J."/>
            <person name="Zhou S."/>
            <person name="Zimmermann W."/>
            <person name="Smith D.F."/>
            <person name="Blackwell J.M."/>
            <person name="Stuart K.D."/>
            <person name="Barrell B.G."/>
            <person name="Myler P.J."/>
        </authorList>
    </citation>
    <scope>NUCLEOTIDE SEQUENCE [LARGE SCALE GENOMIC DNA]</scope>
    <source>
        <strain>MHOM/IL/81/Friedlin</strain>
    </source>
</reference>
<name>MTND_LEIMA</name>
<feature type="chain" id="PRO_0000414351" description="Acireductone dioxygenase">
    <location>
        <begin position="1"/>
        <end position="344"/>
    </location>
</feature>
<feature type="binding site" evidence="1">
    <location>
        <position position="92"/>
    </location>
    <ligand>
        <name>Fe(2+)</name>
        <dbReference type="ChEBI" id="CHEBI:29033"/>
        <note>for iron-dependent acireductone dioxygenase activity</note>
    </ligand>
</feature>
<feature type="binding site" evidence="1">
    <location>
        <position position="92"/>
    </location>
    <ligand>
        <name>Ni(2+)</name>
        <dbReference type="ChEBI" id="CHEBI:49786"/>
        <note>for nickel-dependent acireductone dioxygenase activity</note>
    </ligand>
</feature>
<feature type="binding site" evidence="1">
    <location>
        <position position="94"/>
    </location>
    <ligand>
        <name>Fe(2+)</name>
        <dbReference type="ChEBI" id="CHEBI:29033"/>
        <note>for iron-dependent acireductone dioxygenase activity</note>
    </ligand>
</feature>
<feature type="binding site" evidence="1">
    <location>
        <position position="94"/>
    </location>
    <ligand>
        <name>Ni(2+)</name>
        <dbReference type="ChEBI" id="CHEBI:49786"/>
        <note>for nickel-dependent acireductone dioxygenase activity</note>
    </ligand>
</feature>
<feature type="binding site" evidence="1">
    <location>
        <position position="98"/>
    </location>
    <ligand>
        <name>Fe(2+)</name>
        <dbReference type="ChEBI" id="CHEBI:29033"/>
        <note>for iron-dependent acireductone dioxygenase activity</note>
    </ligand>
</feature>
<feature type="binding site" evidence="1">
    <location>
        <position position="98"/>
    </location>
    <ligand>
        <name>Ni(2+)</name>
        <dbReference type="ChEBI" id="CHEBI:49786"/>
        <note>for nickel-dependent acireductone dioxygenase activity</note>
    </ligand>
</feature>
<feature type="binding site" evidence="1">
    <location>
        <position position="137"/>
    </location>
    <ligand>
        <name>Fe(2+)</name>
        <dbReference type="ChEBI" id="CHEBI:29033"/>
        <note>for iron-dependent acireductone dioxygenase activity</note>
    </ligand>
</feature>
<feature type="binding site" evidence="1">
    <location>
        <position position="137"/>
    </location>
    <ligand>
        <name>Ni(2+)</name>
        <dbReference type="ChEBI" id="CHEBI:49786"/>
        <note>for nickel-dependent acireductone dioxygenase activity</note>
    </ligand>
</feature>
<gene>
    <name type="ORF">LMJF_20_0970</name>
</gene>
<proteinExistence type="inferred from homology"/>
<organism>
    <name type="scientific">Leishmania major</name>
    <dbReference type="NCBI Taxonomy" id="5664"/>
    <lineage>
        <taxon>Eukaryota</taxon>
        <taxon>Discoba</taxon>
        <taxon>Euglenozoa</taxon>
        <taxon>Kinetoplastea</taxon>
        <taxon>Metakinetoplastina</taxon>
        <taxon>Trypanosomatida</taxon>
        <taxon>Trypanosomatidae</taxon>
        <taxon>Leishmaniinae</taxon>
        <taxon>Leishmania</taxon>
    </lineage>
</organism>
<comment type="function">
    <text evidence="1">Catalyzes 2 different reactions between oxygen and the acireductone 1,2-dihydroxy-3-keto-5-methylthiopentene (DHK-MTPene) depending upon the metal bound in the active site. Fe-containing acireductone dioxygenase (Fe-ARD) produces formate and 2-keto-4-methylthiobutyrate (KMTB), the alpha-ketoacid precursor of methionine in the methionine recycle pathway. Ni-containing acireductone dioxygenase (Ni-ARD) produces methylthiopropionate, carbon monoxide and formate, and does not lie on the methionine recycle pathway.</text>
</comment>
<comment type="catalytic activity">
    <reaction evidence="1">
        <text>1,2-dihydroxy-5-(methylsulfanyl)pent-1-en-3-one + O2 = 4-methylsulfanyl-2-oxobutanoate + formate + 2 H(+)</text>
        <dbReference type="Rhea" id="RHEA:24504"/>
        <dbReference type="ChEBI" id="CHEBI:15378"/>
        <dbReference type="ChEBI" id="CHEBI:15379"/>
        <dbReference type="ChEBI" id="CHEBI:15740"/>
        <dbReference type="ChEBI" id="CHEBI:16723"/>
        <dbReference type="ChEBI" id="CHEBI:49252"/>
        <dbReference type="EC" id="1.13.11.54"/>
    </reaction>
</comment>
<comment type="catalytic activity">
    <reaction evidence="1">
        <text>1,2-dihydroxy-5-(methylsulfanyl)pent-1-en-3-one + O2 = 3-(methylsulfanyl)propanoate + CO + formate + 2 H(+)</text>
        <dbReference type="Rhea" id="RHEA:14161"/>
        <dbReference type="ChEBI" id="CHEBI:15378"/>
        <dbReference type="ChEBI" id="CHEBI:15379"/>
        <dbReference type="ChEBI" id="CHEBI:15740"/>
        <dbReference type="ChEBI" id="CHEBI:17245"/>
        <dbReference type="ChEBI" id="CHEBI:49016"/>
        <dbReference type="ChEBI" id="CHEBI:49252"/>
        <dbReference type="EC" id="1.13.11.53"/>
    </reaction>
</comment>
<comment type="cofactor">
    <cofactor evidence="1">
        <name>Fe(2+)</name>
        <dbReference type="ChEBI" id="CHEBI:29033"/>
    </cofactor>
    <cofactor evidence="1">
        <name>Ni(2+)</name>
        <dbReference type="ChEBI" id="CHEBI:49786"/>
    </cofactor>
    <text evidence="1">Binds either 1 Fe or Ni cation per monomer. Iron-binding promotes an acireductone dioxygenase reaction producing 2-keto-4-methylthiobutyrate, while nickel-binding promotes an acireductone dioxygenase reaction producing 3-(methylsulfanyl)propanoate.</text>
</comment>
<comment type="pathway">
    <text evidence="1">Amino-acid biosynthesis; L-methionine biosynthesis via salvage pathway; L-methionine from S-methyl-5-thio-alpha-D-ribose 1-phosphate: step 5/6.</text>
</comment>
<comment type="subcellular location">
    <subcellularLocation>
        <location evidence="1">Cytoplasm</location>
    </subcellularLocation>
    <subcellularLocation>
        <location evidence="1">Nucleus</location>
    </subcellularLocation>
</comment>
<comment type="similarity">
    <text evidence="1">Belongs to the acireductone dioxygenase (ARD) family.</text>
</comment>
<keyword id="KW-0028">Amino-acid biosynthesis</keyword>
<keyword id="KW-0963">Cytoplasm</keyword>
<keyword id="KW-0223">Dioxygenase</keyword>
<keyword id="KW-0408">Iron</keyword>
<keyword id="KW-0479">Metal-binding</keyword>
<keyword id="KW-0486">Methionine biosynthesis</keyword>
<keyword id="KW-0533">Nickel</keyword>
<keyword id="KW-0539">Nucleus</keyword>
<keyword id="KW-0560">Oxidoreductase</keyword>
<keyword id="KW-1185">Reference proteome</keyword>
<evidence type="ECO:0000255" key="1">
    <source>
        <dbReference type="HAMAP-Rule" id="MF_03154"/>
    </source>
</evidence>
<protein>
    <recommendedName>
        <fullName evidence="1">Acireductone dioxygenase</fullName>
    </recommendedName>
    <alternativeName>
        <fullName evidence="1">Acireductone dioxygenase (Fe(2+)-requiring)</fullName>
        <shortName evidence="1">ARD'</shortName>
        <shortName evidence="1">Fe-ARD</shortName>
        <ecNumber evidence="1">1.13.11.54</ecNumber>
    </alternativeName>
    <alternativeName>
        <fullName evidence="1">Acireductone dioxygenase (Ni(2+)-requiring)</fullName>
        <shortName evidence="1">ARD</shortName>
        <shortName evidence="1">Ni-ARD</shortName>
        <ecNumber evidence="1">1.13.11.53</ecNumber>
    </alternativeName>
</protein>
<sequence>MTDCWYIPEAVADRRDENRLSPNVPASYEVLGEAGIFYRHFDSEEVNDNIEGFIQPLLKKLNYQSYDVVNLSPANLGAEKFETLAEQHFMEHIHEDDEVRLILEGQGYFDVRDINDKWIRLLLKPGDCIVVPAGMYHRFTTDQSKCIKTLRIFKEAPQWIALNRGPEAEEKPARKEYLARLHAPAETAVGAVNGRTIFSLRYPLKLDAELTVITKRLLEQHSKQPLALAIYLTGSTDPTTGESWCPDCVLAKLHVARRFAELQGTYGKEHAIFLQLPVERASYLGNPNFFYRTHPILQLASVPTLLVLSPAKDAKEGGDVQWYDLLDVKVRTCDVDRTDVLNLE</sequence>
<accession>Q4QCU9</accession>
<dbReference type="EC" id="1.13.11.54" evidence="1"/>
<dbReference type="EC" id="1.13.11.53" evidence="1"/>
<dbReference type="EMBL" id="FR796416">
    <property type="protein sequence ID" value="CAJ03984.1"/>
    <property type="molecule type" value="Genomic_DNA"/>
</dbReference>
<dbReference type="RefSeq" id="XP_001682849.1">
    <property type="nucleotide sequence ID" value="XM_001682797.1"/>
</dbReference>
<dbReference type="SMR" id="Q4QCU9"/>
<dbReference type="FunCoup" id="Q4QCU9">
    <property type="interactions" value="54"/>
</dbReference>
<dbReference type="STRING" id="5664.Q4QCU9"/>
<dbReference type="EnsemblProtists" id="CAJ03984">
    <property type="protein sequence ID" value="CAJ03984"/>
    <property type="gene ID" value="LMJF_20_0970"/>
</dbReference>
<dbReference type="GeneID" id="5651449"/>
<dbReference type="KEGG" id="lma:LMJF_20_0970"/>
<dbReference type="VEuPathDB" id="TriTrypDB:LmjF.20.0970"/>
<dbReference type="VEuPathDB" id="TriTrypDB:LMJFC_200016000"/>
<dbReference type="VEuPathDB" id="TriTrypDB:LMJLV39_200015100"/>
<dbReference type="VEuPathDB" id="TriTrypDB:LMJSD75_200014900"/>
<dbReference type="eggNOG" id="KOG2107">
    <property type="taxonomic scope" value="Eukaryota"/>
</dbReference>
<dbReference type="HOGENOM" id="CLU_840695_0_0_1"/>
<dbReference type="InParanoid" id="Q4QCU9"/>
<dbReference type="OMA" id="RDINDKW"/>
<dbReference type="UniPathway" id="UPA00904">
    <property type="reaction ID" value="UER00878"/>
</dbReference>
<dbReference type="Proteomes" id="UP000000542">
    <property type="component" value="Chromosome 20"/>
</dbReference>
<dbReference type="GO" id="GO:0005737">
    <property type="term" value="C:cytoplasm"/>
    <property type="evidence" value="ECO:0007669"/>
    <property type="project" value="UniProtKB-SubCell"/>
</dbReference>
<dbReference type="GO" id="GO:0005634">
    <property type="term" value="C:nucleus"/>
    <property type="evidence" value="ECO:0007669"/>
    <property type="project" value="UniProtKB-SubCell"/>
</dbReference>
<dbReference type="GO" id="GO:0010308">
    <property type="term" value="F:acireductone dioxygenase (Ni2+-requiring) activity"/>
    <property type="evidence" value="ECO:0007669"/>
    <property type="project" value="UniProtKB-UniRule"/>
</dbReference>
<dbReference type="GO" id="GO:0010309">
    <property type="term" value="F:acireductone dioxygenase [iron(II)-requiring] activity"/>
    <property type="evidence" value="ECO:0000318"/>
    <property type="project" value="GO_Central"/>
</dbReference>
<dbReference type="GO" id="GO:0005506">
    <property type="term" value="F:iron ion binding"/>
    <property type="evidence" value="ECO:0007669"/>
    <property type="project" value="UniProtKB-UniRule"/>
</dbReference>
<dbReference type="GO" id="GO:0016151">
    <property type="term" value="F:nickel cation binding"/>
    <property type="evidence" value="ECO:0007669"/>
    <property type="project" value="UniProtKB-UniRule"/>
</dbReference>
<dbReference type="GO" id="GO:0019509">
    <property type="term" value="P:L-methionine salvage from methylthioadenosine"/>
    <property type="evidence" value="ECO:0007669"/>
    <property type="project" value="UniProtKB-UniRule"/>
</dbReference>
<dbReference type="GO" id="GO:0006555">
    <property type="term" value="P:methionine metabolic process"/>
    <property type="evidence" value="ECO:0000318"/>
    <property type="project" value="GO_Central"/>
</dbReference>
<dbReference type="CDD" id="cd02232">
    <property type="entry name" value="cupin_ARD"/>
    <property type="match status" value="1"/>
</dbReference>
<dbReference type="FunFam" id="2.60.120.10:FF:000099">
    <property type="entry name" value="1,2-dihydroxy-3-keto-5-methylthiopentene dioxygenase"/>
    <property type="match status" value="1"/>
</dbReference>
<dbReference type="Gene3D" id="3.40.30.10">
    <property type="entry name" value="Glutaredoxin"/>
    <property type="match status" value="1"/>
</dbReference>
<dbReference type="Gene3D" id="2.60.120.10">
    <property type="entry name" value="Jelly Rolls"/>
    <property type="match status" value="1"/>
</dbReference>
<dbReference type="HAMAP" id="MF_03154">
    <property type="entry name" value="Salvage_MtnD_euk"/>
    <property type="match status" value="1"/>
</dbReference>
<dbReference type="InterPro" id="IPR004313">
    <property type="entry name" value="ARD"/>
</dbReference>
<dbReference type="InterPro" id="IPR027496">
    <property type="entry name" value="ARD_euk"/>
</dbReference>
<dbReference type="InterPro" id="IPR014710">
    <property type="entry name" value="RmlC-like_jellyroll"/>
</dbReference>
<dbReference type="InterPro" id="IPR011051">
    <property type="entry name" value="RmlC_Cupin_sf"/>
</dbReference>
<dbReference type="InterPro" id="IPR036249">
    <property type="entry name" value="Thioredoxin-like_sf"/>
</dbReference>
<dbReference type="InterPro" id="IPR010357">
    <property type="entry name" value="TXNDC17_dom"/>
</dbReference>
<dbReference type="PANTHER" id="PTHR23418">
    <property type="entry name" value="ACIREDUCTONE DIOXYGENASE"/>
    <property type="match status" value="1"/>
</dbReference>
<dbReference type="PANTHER" id="PTHR23418:SF0">
    <property type="entry name" value="ACIREDUCTONE DIOXYGENASE"/>
    <property type="match status" value="1"/>
</dbReference>
<dbReference type="Pfam" id="PF03079">
    <property type="entry name" value="ARD"/>
    <property type="match status" value="1"/>
</dbReference>
<dbReference type="Pfam" id="PF06110">
    <property type="entry name" value="TXD17-like_Trx"/>
    <property type="match status" value="1"/>
</dbReference>
<dbReference type="SUPFAM" id="SSF51182">
    <property type="entry name" value="RmlC-like cupins"/>
    <property type="match status" value="1"/>
</dbReference>
<dbReference type="SUPFAM" id="SSF52833">
    <property type="entry name" value="Thioredoxin-like"/>
    <property type="match status" value="1"/>
</dbReference>